<sequence>MQKNMKTKKTKKRGRKEGNTPETERRMEPARSRTSAIPSGLRRRSGPSTPLRPGPEVRHAPTWRTASATTADSHRISPPYTPSSRGRHIHTRGARTRTRETSAAEINGVYARAVTRKTKRSETIDRLLLSVLPGHGPHASLRSHLRARSALRPPPDPPR</sequence>
<reference key="1">
    <citation type="journal article" date="1999" name="J. Virol.">
        <title>Human herpesvirus 6B genome sequence: coding content and comparison with human herpesvirus 6A.</title>
        <authorList>
            <person name="Dominguez G."/>
            <person name="Dambaugh T.R."/>
            <person name="Stamey F.R."/>
            <person name="Dewhurst S."/>
            <person name="Inoue N."/>
            <person name="Pellett P.E."/>
        </authorList>
    </citation>
    <scope>NUCLEOTIDE SEQUENCE [LARGE SCALE GENOMIC DNA]</scope>
</reference>
<gene>
    <name type="primary">B1</name>
</gene>
<organism>
    <name type="scientific">Human herpesvirus 6B (strain Z29)</name>
    <name type="common">HHV-6 variant B</name>
    <name type="synonym">Human B lymphotropic virus</name>
    <dbReference type="NCBI Taxonomy" id="36351"/>
    <lineage>
        <taxon>Viruses</taxon>
        <taxon>Duplodnaviria</taxon>
        <taxon>Heunggongvirae</taxon>
        <taxon>Peploviricota</taxon>
        <taxon>Herviviricetes</taxon>
        <taxon>Herpesvirales</taxon>
        <taxon>Orthoherpesviridae</taxon>
        <taxon>Betaherpesvirinae</taxon>
        <taxon>Roseolovirus</taxon>
        <taxon>Roseolovirus humanbeta6b</taxon>
        <taxon>Human herpesvirus 6B</taxon>
    </lineage>
</organism>
<accession>Q9PX69</accession>
<proteinExistence type="predicted"/>
<protein>
    <recommendedName>
        <fullName>Protein B1</fullName>
    </recommendedName>
</protein>
<organismHost>
    <name type="scientific">Homo sapiens</name>
    <name type="common">Human</name>
    <dbReference type="NCBI Taxonomy" id="9606"/>
</organismHost>
<keyword id="KW-1185">Reference proteome</keyword>
<feature type="chain" id="PRO_0000408392" description="Protein B1">
    <location>
        <begin position="1"/>
        <end position="159"/>
    </location>
</feature>
<feature type="region of interest" description="Disordered" evidence="1">
    <location>
        <begin position="1"/>
        <end position="100"/>
    </location>
</feature>
<feature type="region of interest" description="Disordered" evidence="1">
    <location>
        <begin position="133"/>
        <end position="159"/>
    </location>
</feature>
<feature type="compositionally biased region" description="Basic residues" evidence="1">
    <location>
        <begin position="1"/>
        <end position="15"/>
    </location>
</feature>
<feature type="compositionally biased region" description="Basic and acidic residues" evidence="1">
    <location>
        <begin position="16"/>
        <end position="31"/>
    </location>
</feature>
<feature type="compositionally biased region" description="Basic residues" evidence="1">
    <location>
        <begin position="85"/>
        <end position="96"/>
    </location>
</feature>
<name>B1_HHV6Z</name>
<dbReference type="EMBL" id="AF157706">
    <property type="protein sequence ID" value="AAD49617.1"/>
    <property type="molecule type" value="Genomic_DNA"/>
</dbReference>
<dbReference type="EMBL" id="AF157706">
    <property type="protein sequence ID" value="AAD49684.1"/>
    <property type="molecule type" value="Genomic_DNA"/>
</dbReference>
<dbReference type="RefSeq" id="NP_050178.1">
    <property type="nucleotide sequence ID" value="NC_000898.1"/>
</dbReference>
<dbReference type="RefSeq" id="NP_050275.1">
    <property type="nucleotide sequence ID" value="NC_000898.1"/>
</dbReference>
<dbReference type="DNASU" id="1497000"/>
<dbReference type="GeneID" id="1497000"/>
<dbReference type="GeneID" id="1497096"/>
<dbReference type="KEGG" id="vg:1497000"/>
<dbReference type="KEGG" id="vg:1497096"/>
<dbReference type="Proteomes" id="UP000006930">
    <property type="component" value="Segment"/>
</dbReference>
<evidence type="ECO:0000256" key="1">
    <source>
        <dbReference type="SAM" id="MobiDB-lite"/>
    </source>
</evidence>